<proteinExistence type="evidence at protein level"/>
<dbReference type="EC" id="4.2.1.182" evidence="6"/>
<dbReference type="EMBL" id="AE008384">
    <property type="protein sequence ID" value="AAM31221.1"/>
    <property type="molecule type" value="Genomic_DNA"/>
</dbReference>
<dbReference type="RefSeq" id="WP_011033471.1">
    <property type="nucleotide sequence ID" value="NC_003901.1"/>
</dbReference>
<dbReference type="SMR" id="Q8PWQ1"/>
<dbReference type="KEGG" id="mma:MM_1525"/>
<dbReference type="PATRIC" id="fig|192952.21.peg.1761"/>
<dbReference type="eggNOG" id="arCOG04278">
    <property type="taxonomic scope" value="Archaea"/>
</dbReference>
<dbReference type="HOGENOM" id="CLU_018825_1_0_2"/>
<dbReference type="UniPathway" id="UPA00057"/>
<dbReference type="Proteomes" id="UP000000595">
    <property type="component" value="Chromosome"/>
</dbReference>
<dbReference type="GO" id="GO:0051539">
    <property type="term" value="F:4 iron, 4 sulfur cluster binding"/>
    <property type="evidence" value="ECO:0007669"/>
    <property type="project" value="UniProtKB-KW"/>
</dbReference>
<dbReference type="GO" id="GO:0016829">
    <property type="term" value="F:lyase activity"/>
    <property type="evidence" value="ECO:0007669"/>
    <property type="project" value="UniProtKB-KW"/>
</dbReference>
<dbReference type="GO" id="GO:0046872">
    <property type="term" value="F:metal ion binding"/>
    <property type="evidence" value="ECO:0007669"/>
    <property type="project" value="UniProtKB-KW"/>
</dbReference>
<dbReference type="GO" id="GO:0008299">
    <property type="term" value="P:isoprenoid biosynthetic process"/>
    <property type="evidence" value="ECO:0007669"/>
    <property type="project" value="UniProtKB-KW"/>
</dbReference>
<dbReference type="CDD" id="cd01355">
    <property type="entry name" value="AcnX"/>
    <property type="match status" value="1"/>
</dbReference>
<dbReference type="InterPro" id="IPR007506">
    <property type="entry name" value="PMDh-L-like_dom"/>
</dbReference>
<dbReference type="PANTHER" id="PTHR36577">
    <property type="entry name" value="DUF521 DOMAIN PROTEIN (AFU_ORTHOLOGUE AFUA_6G00490)"/>
    <property type="match status" value="1"/>
</dbReference>
<dbReference type="PANTHER" id="PTHR36577:SF3">
    <property type="entry name" value="DUF521 DOMAIN PROTEIN (AFU_ORTHOLOGUE AFUA_6G00490)"/>
    <property type="match status" value="1"/>
</dbReference>
<dbReference type="Pfam" id="PF04412">
    <property type="entry name" value="AcnX"/>
    <property type="match status" value="1"/>
</dbReference>
<gene>
    <name evidence="7" type="ordered locus">MM_1525</name>
</gene>
<sequence length="398" mass="43195">MYLTKEEEQILNGEAGETLRQAIQILVALGDIYGADRLIPIKSAQIAGVSYKTIGDAGLEWISDLEGQVKVPAILNPAGMDLEDWERLRISPEFAEKQKEIVQAYKKLGIRCECTCTPYTLEGFSVSYGDHLAWSESSAISYANSVIGARTNREGGPSALSAALLGKTANYGFHLDKNRVPEVSVSVECSLKESDYGALGYVAGKLIGNRVPIFQLRSKPEKDELKSLGAAMAASGAVALYHVKGVTPEACRMDFEEPEEKIIIERSQLDEVYESKGKEPELITIGCPHCSAAELKKAAELLKGKTVSKETWIFTSRELAERYPEYIRTIEESGAKVVCDTCMVVSPATNSYSCVMVNSGKAFAYVPGMCGAQSVYGNMEACINKATGGKERKAGDSH</sequence>
<reference key="1">
    <citation type="journal article" date="2002" name="J. Mol. Microbiol. Biotechnol.">
        <title>The genome of Methanosarcina mazei: evidence for lateral gene transfer between Bacteria and Archaea.</title>
        <authorList>
            <person name="Deppenmeier U."/>
            <person name="Johann A."/>
            <person name="Hartsch T."/>
            <person name="Merkl R."/>
            <person name="Schmitz R.A."/>
            <person name="Martinez-Arias R."/>
            <person name="Henne A."/>
            <person name="Wiezer A."/>
            <person name="Baeumer S."/>
            <person name="Jacobi C."/>
            <person name="Brueggemann H."/>
            <person name="Lienard T."/>
            <person name="Christmann A."/>
            <person name="Boemecke M."/>
            <person name="Steckel S."/>
            <person name="Bhattacharyya A."/>
            <person name="Lykidis A."/>
            <person name="Overbeek R."/>
            <person name="Klenk H.-P."/>
            <person name="Gunsalus R.P."/>
            <person name="Fritz H.-J."/>
            <person name="Gottschalk G."/>
        </authorList>
    </citation>
    <scope>NUCLEOTIDE SEQUENCE [LARGE SCALE GENOMIC DNA]</scope>
    <source>
        <strain>ATCC BAA-159 / DSM 3647 / Goe1 / Go1 / JCM 11833 / OCM 88</strain>
    </source>
</reference>
<reference key="2">
    <citation type="journal article" date="2020" name="Appl. Environ. Microbiol.">
        <title>Reconstruction of the 'Archaeal' Mevalonate Pathway from the Methanogenic Archaeon Methanosarcina mazei in Escherichia coli Cells.</title>
        <authorList>
            <person name="Yoshida R."/>
            <person name="Yoshimura T."/>
            <person name="Hemmi H."/>
        </authorList>
    </citation>
    <scope>FUNCTION IN MEVALONATE BIOSYNTHESIS</scope>
    <scope>PATHWAY</scope>
    <source>
        <strain>ATCC BAA-159 / DSM 3647 / Goe1 / Go1 / JCM 11833 / OCM 88</strain>
    </source>
</reference>
<name>PMDHL_METMA</name>
<evidence type="ECO:0000250" key="1">
    <source>
        <dbReference type="UniProtKB" id="Q5JGJ6"/>
    </source>
</evidence>
<evidence type="ECO:0000250" key="2">
    <source>
        <dbReference type="UniProtKB" id="Q9YA51"/>
    </source>
</evidence>
<evidence type="ECO:0000269" key="3">
    <source>
    </source>
</evidence>
<evidence type="ECO:0000303" key="4">
    <source>
    </source>
</evidence>
<evidence type="ECO:0000305" key="5"/>
<evidence type="ECO:0000305" key="6">
    <source>
    </source>
</evidence>
<evidence type="ECO:0000312" key="7">
    <source>
        <dbReference type="EMBL" id="AAM31221.1"/>
    </source>
</evidence>
<feature type="chain" id="PRO_0000460844" description="Phosphomevalonate dehydratase large subunit">
    <location>
        <begin position="1"/>
        <end position="398"/>
    </location>
</feature>
<feature type="binding site" evidence="1">
    <location>
        <position position="48"/>
    </location>
    <ligand>
        <name>(R)-5-phosphomevalonate</name>
        <dbReference type="ChEBI" id="CHEBI:58146"/>
    </ligand>
</feature>
<feature type="binding site" evidence="1">
    <location>
        <position position="49"/>
    </location>
    <ligand>
        <name>(R)-5-phosphomevalonate</name>
        <dbReference type="ChEBI" id="CHEBI:58146"/>
    </ligand>
</feature>
<feature type="binding site" evidence="1">
    <location>
        <position position="50"/>
    </location>
    <ligand>
        <name>(R)-5-phosphomevalonate</name>
        <dbReference type="ChEBI" id="CHEBI:58146"/>
    </ligand>
</feature>
<feature type="binding site" evidence="1">
    <location>
        <position position="76"/>
    </location>
    <ligand>
        <name>(R)-5-phosphomevalonate</name>
        <dbReference type="ChEBI" id="CHEBI:58146"/>
    </ligand>
</feature>
<feature type="binding site" evidence="1">
    <location>
        <position position="77"/>
    </location>
    <ligand>
        <name>(R)-5-phosphomevalonate</name>
        <dbReference type="ChEBI" id="CHEBI:58146"/>
    </ligand>
</feature>
<feature type="binding site" evidence="1">
    <location>
        <position position="116"/>
    </location>
    <ligand>
        <name>[4Fe-4S] cluster</name>
        <dbReference type="ChEBI" id="CHEBI:49883"/>
    </ligand>
</feature>
<feature type="binding site" evidence="1">
    <location>
        <position position="136"/>
    </location>
    <ligand>
        <name>(R)-5-phosphomevalonate</name>
        <dbReference type="ChEBI" id="CHEBI:58146"/>
    </ligand>
</feature>
<feature type="binding site" evidence="1">
    <location>
        <position position="137"/>
    </location>
    <ligand>
        <name>(R)-5-phosphomevalonate</name>
        <dbReference type="ChEBI" id="CHEBI:58146"/>
    </ligand>
</feature>
<feature type="binding site" evidence="1">
    <location>
        <position position="287"/>
    </location>
    <ligand>
        <name>[4Fe-4S] cluster</name>
        <dbReference type="ChEBI" id="CHEBI:49883"/>
    </ligand>
</feature>
<feature type="binding site" evidence="1">
    <location>
        <position position="342"/>
    </location>
    <ligand>
        <name>[4Fe-4S] cluster</name>
        <dbReference type="ChEBI" id="CHEBI:49883"/>
    </ligand>
</feature>
<feature type="binding site" evidence="1">
    <location>
        <position position="361"/>
    </location>
    <ligand>
        <name>(R)-5-phosphomevalonate</name>
        <dbReference type="ChEBI" id="CHEBI:58146"/>
    </ligand>
</feature>
<organism>
    <name type="scientific">Methanosarcina mazei (strain ATCC BAA-159 / DSM 3647 / Goe1 / Go1 / JCM 11833 / OCM 88)</name>
    <name type="common">Methanosarcina frisia</name>
    <dbReference type="NCBI Taxonomy" id="192952"/>
    <lineage>
        <taxon>Archaea</taxon>
        <taxon>Methanobacteriati</taxon>
        <taxon>Methanobacteriota</taxon>
        <taxon>Stenosarchaea group</taxon>
        <taxon>Methanomicrobia</taxon>
        <taxon>Methanosarcinales</taxon>
        <taxon>Methanosarcinaceae</taxon>
        <taxon>Methanosarcina</taxon>
    </lineage>
</organism>
<protein>
    <recommendedName>
        <fullName evidence="4">Phosphomevalonate dehydratase large subunit</fullName>
        <shortName evidence="4">PMDh large subunit</shortName>
        <shortName evidence="4">PMDh-L</shortName>
        <ecNumber evidence="6">4.2.1.182</ecNumber>
    </recommendedName>
</protein>
<comment type="function">
    <text evidence="3 6">Component of a hydro-lyase that catalyzes the dehydration of mevalonate 5-phosphate (MVA5P) to form trans-anhydromevalonate 5-phosphate (tAHMP) (Probable). Involved in the archaeal mevalonate (MVA) pathway, which provides fundamental precursors for isoprenoid biosynthesis, such as isopentenyl diphosphate (IPP) and dimethylallyl diphosphate (DMAPP) (PubMed:31924615).</text>
</comment>
<comment type="catalytic activity">
    <reaction evidence="6">
        <text>(R)-5-phosphomevalonate = (2E)-3-methyl-5-phosphooxypent-2-enoate + H2O</text>
        <dbReference type="Rhea" id="RHEA:78975"/>
        <dbReference type="ChEBI" id="CHEBI:15377"/>
        <dbReference type="ChEBI" id="CHEBI:58146"/>
        <dbReference type="ChEBI" id="CHEBI:229665"/>
        <dbReference type="EC" id="4.2.1.182"/>
    </reaction>
    <physiologicalReaction direction="left-to-right" evidence="6">
        <dbReference type="Rhea" id="RHEA:78976"/>
    </physiologicalReaction>
</comment>
<comment type="cofactor">
    <cofactor evidence="2">
        <name>[4Fe-4S] cluster</name>
        <dbReference type="ChEBI" id="CHEBI:49883"/>
    </cofactor>
    <text evidence="2">Binds 1 [4Fe-4S] cluster per subunit.</text>
</comment>
<comment type="pathway">
    <text evidence="3">Isoprenoid biosynthesis; isopentenyl diphosphate biosynthesis via mevalonate pathway.</text>
</comment>
<comment type="subunit">
    <text evidence="2">Heterodimer composed of a large subunit (PMDh-L) and a small subunit (PMDh-S).</text>
</comment>
<comment type="similarity">
    <text evidence="5">Belongs to the AcnX type II large subunit family.</text>
</comment>
<keyword id="KW-0004">4Fe-4S</keyword>
<keyword id="KW-0408">Iron</keyword>
<keyword id="KW-0411">Iron-sulfur</keyword>
<keyword id="KW-0414">Isoprene biosynthesis</keyword>
<keyword id="KW-0456">Lyase</keyword>
<keyword id="KW-0479">Metal-binding</keyword>
<accession>Q8PWQ1</accession>